<dbReference type="EC" id="2.5.1.31" evidence="1"/>
<dbReference type="EMBL" id="BX571861">
    <property type="protein sequence ID" value="CAE12972.1"/>
    <property type="molecule type" value="Genomic_DNA"/>
</dbReference>
<dbReference type="RefSeq" id="WP_011145053.1">
    <property type="nucleotide sequence ID" value="NC_005126.1"/>
</dbReference>
<dbReference type="SMR" id="Q7N8P2"/>
<dbReference type="STRING" id="243265.plu0677"/>
<dbReference type="GeneID" id="48846966"/>
<dbReference type="KEGG" id="plu:plu0677"/>
<dbReference type="eggNOG" id="COG0020">
    <property type="taxonomic scope" value="Bacteria"/>
</dbReference>
<dbReference type="HOGENOM" id="CLU_038505_1_1_6"/>
<dbReference type="OrthoDB" id="4191603at2"/>
<dbReference type="Proteomes" id="UP000002514">
    <property type="component" value="Chromosome"/>
</dbReference>
<dbReference type="GO" id="GO:0005829">
    <property type="term" value="C:cytosol"/>
    <property type="evidence" value="ECO:0007669"/>
    <property type="project" value="TreeGrafter"/>
</dbReference>
<dbReference type="GO" id="GO:0008834">
    <property type="term" value="F:ditrans,polycis-undecaprenyl-diphosphate synthase [(2E,6E)-farnesyl-diphosphate specific] activity"/>
    <property type="evidence" value="ECO:0007669"/>
    <property type="project" value="UniProtKB-UniRule"/>
</dbReference>
<dbReference type="GO" id="GO:0000287">
    <property type="term" value="F:magnesium ion binding"/>
    <property type="evidence" value="ECO:0007669"/>
    <property type="project" value="UniProtKB-UniRule"/>
</dbReference>
<dbReference type="GO" id="GO:0071555">
    <property type="term" value="P:cell wall organization"/>
    <property type="evidence" value="ECO:0007669"/>
    <property type="project" value="UniProtKB-KW"/>
</dbReference>
<dbReference type="GO" id="GO:0009252">
    <property type="term" value="P:peptidoglycan biosynthetic process"/>
    <property type="evidence" value="ECO:0007669"/>
    <property type="project" value="UniProtKB-UniRule"/>
</dbReference>
<dbReference type="GO" id="GO:0016094">
    <property type="term" value="P:polyprenol biosynthetic process"/>
    <property type="evidence" value="ECO:0007669"/>
    <property type="project" value="TreeGrafter"/>
</dbReference>
<dbReference type="GO" id="GO:0008360">
    <property type="term" value="P:regulation of cell shape"/>
    <property type="evidence" value="ECO:0007669"/>
    <property type="project" value="UniProtKB-KW"/>
</dbReference>
<dbReference type="CDD" id="cd00475">
    <property type="entry name" value="Cis_IPPS"/>
    <property type="match status" value="1"/>
</dbReference>
<dbReference type="FunFam" id="3.40.1180.10:FF:000001">
    <property type="entry name" value="(2E,6E)-farnesyl-diphosphate-specific ditrans,polycis-undecaprenyl-diphosphate synthase"/>
    <property type="match status" value="1"/>
</dbReference>
<dbReference type="Gene3D" id="3.40.1180.10">
    <property type="entry name" value="Decaprenyl diphosphate synthase-like"/>
    <property type="match status" value="1"/>
</dbReference>
<dbReference type="HAMAP" id="MF_01139">
    <property type="entry name" value="ISPT"/>
    <property type="match status" value="1"/>
</dbReference>
<dbReference type="InterPro" id="IPR001441">
    <property type="entry name" value="UPP_synth-like"/>
</dbReference>
<dbReference type="InterPro" id="IPR018520">
    <property type="entry name" value="UPP_synth-like_CS"/>
</dbReference>
<dbReference type="InterPro" id="IPR036424">
    <property type="entry name" value="UPP_synth-like_sf"/>
</dbReference>
<dbReference type="NCBIfam" id="NF007596">
    <property type="entry name" value="PRK10240.1"/>
    <property type="match status" value="1"/>
</dbReference>
<dbReference type="NCBIfam" id="NF011405">
    <property type="entry name" value="PRK14830.1"/>
    <property type="match status" value="1"/>
</dbReference>
<dbReference type="NCBIfam" id="TIGR00055">
    <property type="entry name" value="uppS"/>
    <property type="match status" value="1"/>
</dbReference>
<dbReference type="PANTHER" id="PTHR10291:SF0">
    <property type="entry name" value="DEHYDRODOLICHYL DIPHOSPHATE SYNTHASE 2"/>
    <property type="match status" value="1"/>
</dbReference>
<dbReference type="PANTHER" id="PTHR10291">
    <property type="entry name" value="DEHYDRODOLICHYL DIPHOSPHATE SYNTHASE FAMILY MEMBER"/>
    <property type="match status" value="1"/>
</dbReference>
<dbReference type="Pfam" id="PF01255">
    <property type="entry name" value="Prenyltransf"/>
    <property type="match status" value="1"/>
</dbReference>
<dbReference type="SUPFAM" id="SSF64005">
    <property type="entry name" value="Undecaprenyl diphosphate synthase"/>
    <property type="match status" value="1"/>
</dbReference>
<dbReference type="PROSITE" id="PS01066">
    <property type="entry name" value="UPP_SYNTHASE"/>
    <property type="match status" value="1"/>
</dbReference>
<proteinExistence type="inferred from homology"/>
<reference key="1">
    <citation type="journal article" date="2003" name="Nat. Biotechnol.">
        <title>The genome sequence of the entomopathogenic bacterium Photorhabdus luminescens.</title>
        <authorList>
            <person name="Duchaud E."/>
            <person name="Rusniok C."/>
            <person name="Frangeul L."/>
            <person name="Buchrieser C."/>
            <person name="Givaudan A."/>
            <person name="Taourit S."/>
            <person name="Bocs S."/>
            <person name="Boursaux-Eude C."/>
            <person name="Chandler M."/>
            <person name="Charles J.-F."/>
            <person name="Dassa E."/>
            <person name="Derose R."/>
            <person name="Derzelle S."/>
            <person name="Freyssinet G."/>
            <person name="Gaudriault S."/>
            <person name="Medigue C."/>
            <person name="Lanois A."/>
            <person name="Powell K."/>
            <person name="Siguier P."/>
            <person name="Vincent R."/>
            <person name="Wingate V."/>
            <person name="Zouine M."/>
            <person name="Glaser P."/>
            <person name="Boemare N."/>
            <person name="Danchin A."/>
            <person name="Kunst F."/>
        </authorList>
    </citation>
    <scope>NUCLEOTIDE SEQUENCE [LARGE SCALE GENOMIC DNA]</scope>
    <source>
        <strain>DSM 15139 / CIP 105565 / TT01</strain>
    </source>
</reference>
<accession>Q7N8P2</accession>
<organism>
    <name type="scientific">Photorhabdus laumondii subsp. laumondii (strain DSM 15139 / CIP 105565 / TT01)</name>
    <name type="common">Photorhabdus luminescens subsp. laumondii</name>
    <dbReference type="NCBI Taxonomy" id="243265"/>
    <lineage>
        <taxon>Bacteria</taxon>
        <taxon>Pseudomonadati</taxon>
        <taxon>Pseudomonadota</taxon>
        <taxon>Gammaproteobacteria</taxon>
        <taxon>Enterobacterales</taxon>
        <taxon>Morganellaceae</taxon>
        <taxon>Photorhabdus</taxon>
    </lineage>
</organism>
<comment type="function">
    <text evidence="1">Catalyzes the sequential condensation of isopentenyl diphosphate (IPP) with (2E,6E)-farnesyl diphosphate (E,E-FPP) to yield (2Z,6Z,10Z,14Z,18Z,22Z,26Z,30Z,34E,38E)-undecaprenyl diphosphate (di-trans,octa-cis-UPP). UPP is the precursor of glycosyl carrier lipid in the biosynthesis of bacterial cell wall polysaccharide components such as peptidoglycan and lipopolysaccharide.</text>
</comment>
<comment type="catalytic activity">
    <reaction evidence="1">
        <text>8 isopentenyl diphosphate + (2E,6E)-farnesyl diphosphate = di-trans,octa-cis-undecaprenyl diphosphate + 8 diphosphate</text>
        <dbReference type="Rhea" id="RHEA:27551"/>
        <dbReference type="ChEBI" id="CHEBI:33019"/>
        <dbReference type="ChEBI" id="CHEBI:58405"/>
        <dbReference type="ChEBI" id="CHEBI:128769"/>
        <dbReference type="ChEBI" id="CHEBI:175763"/>
        <dbReference type="EC" id="2.5.1.31"/>
    </reaction>
</comment>
<comment type="cofactor">
    <cofactor evidence="1">
        <name>Mg(2+)</name>
        <dbReference type="ChEBI" id="CHEBI:18420"/>
    </cofactor>
    <text evidence="1">Binds 2 magnesium ions per subunit.</text>
</comment>
<comment type="subunit">
    <text evidence="1">Homodimer.</text>
</comment>
<comment type="similarity">
    <text evidence="1">Belongs to the UPP synthase family.</text>
</comment>
<name>UPPS_PHOLL</name>
<sequence>MILSSDHHQNDLSSLLPKHVAIIMDGNGRWAKKRGKLRAFGHRAGIKAVRSAVSFSAKHNIESLTLYAFSSENWNRPEQEVSSLMELFIFALDSEIKSLHKHNIRLSVIGDIGRFSERLQDRIHRSVKLTANNTGLQLNIAANYGGRWDIVQSVQKIAQQIKDNSLEQQDITEELVNNYMNLSQQPQVDLVIRTGGEHRISNFLLWQIAYAEFYFTDILWPDFDENVFEGAINAFAKRERRFGGTIPDDADVGS</sequence>
<gene>
    <name evidence="1" type="primary">uppS</name>
    <name type="ordered locus">plu0677</name>
</gene>
<feature type="chain" id="PRO_0000123648" description="Ditrans,polycis-undecaprenyl-diphosphate synthase ((2E,6E)-farnesyl-diphosphate specific)">
    <location>
        <begin position="1"/>
        <end position="254"/>
    </location>
</feature>
<feature type="active site" evidence="1">
    <location>
        <position position="25"/>
    </location>
</feature>
<feature type="active site" description="Proton acceptor" evidence="1">
    <location>
        <position position="73"/>
    </location>
</feature>
<feature type="binding site" evidence="1">
    <location>
        <position position="25"/>
    </location>
    <ligand>
        <name>Mg(2+)</name>
        <dbReference type="ChEBI" id="CHEBI:18420"/>
    </ligand>
</feature>
<feature type="binding site" evidence="1">
    <location>
        <begin position="26"/>
        <end position="29"/>
    </location>
    <ligand>
        <name>substrate</name>
    </ligand>
</feature>
<feature type="binding site" evidence="1">
    <location>
        <position position="30"/>
    </location>
    <ligand>
        <name>substrate</name>
    </ligand>
</feature>
<feature type="binding site" evidence="1">
    <location>
        <position position="38"/>
    </location>
    <ligand>
        <name>substrate</name>
    </ligand>
</feature>
<feature type="binding site" evidence="1">
    <location>
        <position position="42"/>
    </location>
    <ligand>
        <name>substrate</name>
    </ligand>
</feature>
<feature type="binding site" evidence="1">
    <location>
        <begin position="70"/>
        <end position="72"/>
    </location>
    <ligand>
        <name>substrate</name>
    </ligand>
</feature>
<feature type="binding site" evidence="1">
    <location>
        <position position="74"/>
    </location>
    <ligand>
        <name>substrate</name>
    </ligand>
</feature>
<feature type="binding site" evidence="1">
    <location>
        <position position="76"/>
    </location>
    <ligand>
        <name>substrate</name>
    </ligand>
</feature>
<feature type="binding site" evidence="1">
    <location>
        <position position="193"/>
    </location>
    <ligand>
        <name>substrate</name>
    </ligand>
</feature>
<feature type="binding site" evidence="1">
    <location>
        <position position="198"/>
    </location>
    <ligand>
        <name>Mg(2+)</name>
        <dbReference type="ChEBI" id="CHEBI:18420"/>
    </ligand>
</feature>
<feature type="binding site" evidence="1">
    <location>
        <begin position="199"/>
        <end position="201"/>
    </location>
    <ligand>
        <name>substrate</name>
    </ligand>
</feature>
<feature type="binding site" evidence="1">
    <location>
        <position position="212"/>
    </location>
    <ligand>
        <name>Mg(2+)</name>
        <dbReference type="ChEBI" id="CHEBI:18420"/>
    </ligand>
</feature>
<protein>
    <recommendedName>
        <fullName evidence="1">Ditrans,polycis-undecaprenyl-diphosphate synthase ((2E,6E)-farnesyl-diphosphate specific)</fullName>
        <ecNumber evidence="1">2.5.1.31</ecNumber>
    </recommendedName>
    <alternativeName>
        <fullName evidence="1">Ditrans,polycis-undecaprenylcistransferase</fullName>
    </alternativeName>
    <alternativeName>
        <fullName evidence="1">Undecaprenyl diphosphate synthase</fullName>
        <shortName evidence="1">UDS</shortName>
    </alternativeName>
    <alternativeName>
        <fullName evidence="1">Undecaprenyl pyrophosphate synthase</fullName>
        <shortName evidence="1">UPP synthase</shortName>
    </alternativeName>
</protein>
<keyword id="KW-0133">Cell shape</keyword>
<keyword id="KW-0961">Cell wall biogenesis/degradation</keyword>
<keyword id="KW-0460">Magnesium</keyword>
<keyword id="KW-0479">Metal-binding</keyword>
<keyword id="KW-0573">Peptidoglycan synthesis</keyword>
<keyword id="KW-1185">Reference proteome</keyword>
<keyword id="KW-0808">Transferase</keyword>
<evidence type="ECO:0000255" key="1">
    <source>
        <dbReference type="HAMAP-Rule" id="MF_01139"/>
    </source>
</evidence>